<gene>
    <name evidence="1" type="primary">dadA</name>
    <name type="ordered locus">BMASAVP1_A2551</name>
</gene>
<proteinExistence type="inferred from homology"/>
<keyword id="KW-0274">FAD</keyword>
<keyword id="KW-0285">Flavoprotein</keyword>
<keyword id="KW-0560">Oxidoreductase</keyword>
<organism>
    <name type="scientific">Burkholderia mallei (strain SAVP1)</name>
    <dbReference type="NCBI Taxonomy" id="320388"/>
    <lineage>
        <taxon>Bacteria</taxon>
        <taxon>Pseudomonadati</taxon>
        <taxon>Pseudomonadota</taxon>
        <taxon>Betaproteobacteria</taxon>
        <taxon>Burkholderiales</taxon>
        <taxon>Burkholderiaceae</taxon>
        <taxon>Burkholderia</taxon>
        <taxon>pseudomallei group</taxon>
    </lineage>
</organism>
<dbReference type="EC" id="1.4.99.-" evidence="1"/>
<dbReference type="EMBL" id="CP000526">
    <property type="protein sequence ID" value="ABM49592.1"/>
    <property type="molecule type" value="Genomic_DNA"/>
</dbReference>
<dbReference type="RefSeq" id="WP_004189387.1">
    <property type="nucleotide sequence ID" value="NC_008785.1"/>
</dbReference>
<dbReference type="SMR" id="A1V6K0"/>
<dbReference type="KEGG" id="bmv:BMASAVP1_A2551"/>
<dbReference type="HOGENOM" id="CLU_007884_9_2_4"/>
<dbReference type="UniPathway" id="UPA00043">
    <property type="reaction ID" value="UER00498"/>
</dbReference>
<dbReference type="GO" id="GO:0005737">
    <property type="term" value="C:cytoplasm"/>
    <property type="evidence" value="ECO:0007669"/>
    <property type="project" value="TreeGrafter"/>
</dbReference>
<dbReference type="GO" id="GO:0005886">
    <property type="term" value="C:plasma membrane"/>
    <property type="evidence" value="ECO:0007669"/>
    <property type="project" value="TreeGrafter"/>
</dbReference>
<dbReference type="GO" id="GO:0008718">
    <property type="term" value="F:D-amino-acid dehydrogenase activity"/>
    <property type="evidence" value="ECO:0007669"/>
    <property type="project" value="UniProtKB-UniRule"/>
</dbReference>
<dbReference type="GO" id="GO:0055130">
    <property type="term" value="P:D-alanine catabolic process"/>
    <property type="evidence" value="ECO:0007669"/>
    <property type="project" value="UniProtKB-UniPathway"/>
</dbReference>
<dbReference type="FunFam" id="3.50.50.60:FF:000020">
    <property type="entry name" value="D-amino acid dehydrogenase"/>
    <property type="match status" value="1"/>
</dbReference>
<dbReference type="Gene3D" id="3.30.9.10">
    <property type="entry name" value="D-Amino Acid Oxidase, subunit A, domain 2"/>
    <property type="match status" value="1"/>
</dbReference>
<dbReference type="Gene3D" id="3.50.50.60">
    <property type="entry name" value="FAD/NAD(P)-binding domain"/>
    <property type="match status" value="2"/>
</dbReference>
<dbReference type="HAMAP" id="MF_01202">
    <property type="entry name" value="DadA"/>
    <property type="match status" value="1"/>
</dbReference>
<dbReference type="InterPro" id="IPR023080">
    <property type="entry name" value="DadA"/>
</dbReference>
<dbReference type="InterPro" id="IPR006076">
    <property type="entry name" value="FAD-dep_OxRdtase"/>
</dbReference>
<dbReference type="InterPro" id="IPR036188">
    <property type="entry name" value="FAD/NAD-bd_sf"/>
</dbReference>
<dbReference type="NCBIfam" id="NF001933">
    <property type="entry name" value="PRK00711.1"/>
    <property type="match status" value="1"/>
</dbReference>
<dbReference type="PANTHER" id="PTHR13847:SF280">
    <property type="entry name" value="D-AMINO ACID DEHYDROGENASE"/>
    <property type="match status" value="1"/>
</dbReference>
<dbReference type="PANTHER" id="PTHR13847">
    <property type="entry name" value="SARCOSINE DEHYDROGENASE-RELATED"/>
    <property type="match status" value="1"/>
</dbReference>
<dbReference type="Pfam" id="PF01266">
    <property type="entry name" value="DAO"/>
    <property type="match status" value="1"/>
</dbReference>
<dbReference type="SUPFAM" id="SSF54373">
    <property type="entry name" value="FAD-linked reductases, C-terminal domain"/>
    <property type="match status" value="1"/>
</dbReference>
<dbReference type="SUPFAM" id="SSF51905">
    <property type="entry name" value="FAD/NAD(P)-binding domain"/>
    <property type="match status" value="1"/>
</dbReference>
<feature type="chain" id="PRO_1000066078" description="D-amino acid dehydrogenase">
    <location>
        <begin position="1"/>
        <end position="428"/>
    </location>
</feature>
<feature type="binding site" evidence="1">
    <location>
        <begin position="3"/>
        <end position="17"/>
    </location>
    <ligand>
        <name>FAD</name>
        <dbReference type="ChEBI" id="CHEBI:57692"/>
    </ligand>
</feature>
<comment type="function">
    <text evidence="1">Oxidative deamination of D-amino acids.</text>
</comment>
<comment type="catalytic activity">
    <reaction evidence="1">
        <text>a D-alpha-amino acid + A + H2O = a 2-oxocarboxylate + AH2 + NH4(+)</text>
        <dbReference type="Rhea" id="RHEA:18125"/>
        <dbReference type="ChEBI" id="CHEBI:13193"/>
        <dbReference type="ChEBI" id="CHEBI:15377"/>
        <dbReference type="ChEBI" id="CHEBI:17499"/>
        <dbReference type="ChEBI" id="CHEBI:28938"/>
        <dbReference type="ChEBI" id="CHEBI:35179"/>
        <dbReference type="ChEBI" id="CHEBI:59871"/>
    </reaction>
</comment>
<comment type="cofactor">
    <cofactor evidence="1">
        <name>FAD</name>
        <dbReference type="ChEBI" id="CHEBI:57692"/>
    </cofactor>
</comment>
<comment type="pathway">
    <text>Amino-acid degradation; D-alanine degradation; NH(3) and pyruvate from D-alanine: step 1/1.</text>
</comment>
<comment type="similarity">
    <text evidence="1">Belongs to the DadA oxidoreductase family.</text>
</comment>
<reference key="1">
    <citation type="journal article" date="2010" name="Genome Biol. Evol.">
        <title>Continuing evolution of Burkholderia mallei through genome reduction and large-scale rearrangements.</title>
        <authorList>
            <person name="Losada L."/>
            <person name="Ronning C.M."/>
            <person name="DeShazer D."/>
            <person name="Woods D."/>
            <person name="Fedorova N."/>
            <person name="Kim H.S."/>
            <person name="Shabalina S.A."/>
            <person name="Pearson T.R."/>
            <person name="Brinkac L."/>
            <person name="Tan P."/>
            <person name="Nandi T."/>
            <person name="Crabtree J."/>
            <person name="Badger J."/>
            <person name="Beckstrom-Sternberg S."/>
            <person name="Saqib M."/>
            <person name="Schutzer S.E."/>
            <person name="Keim P."/>
            <person name="Nierman W.C."/>
        </authorList>
    </citation>
    <scope>NUCLEOTIDE SEQUENCE [LARGE SCALE GENOMIC DNA]</scope>
    <source>
        <strain>SAVP1</strain>
    </source>
</reference>
<sequence length="428" mass="46175">MRVVILGSGVVGVASAYYLARAGHEVTVIDREAGPALDTSFANAGQISPGYAAPWAAPGVPLKAVKWMFEKHAPLAIRLDGTRFQLQWMWQMLRNCTTERYALNKGRMVRLAEYSRDCLQALRAETAIQYEGRTGGTLQVFRTQQQLDGAAKDIAVLREANVPFELLSSDELKKAEPALAAVSHKLTGGLRLPGDETGDCQLFTTRLAALAEQLGVKFRFNTRIDALAVAGGKIAGVQCGGEMVRADAYVVALGSYSTNLVASLVKIPVYPLKGYSITAPIVDAAKAPVSTVLDETYKIAITRFDDRIRVGGMAEIVGFDKRLRDARRGTLEMCVNDLFPGGGDTAKATFWTGLRPMTPDGTPIVGRTPVPNLFLNTGHGTLGWTMSCGSGQLLADLMSGKKPAIRADDLSVHRYLSETDGEHRPAYA</sequence>
<name>DADA_BURMS</name>
<evidence type="ECO:0000255" key="1">
    <source>
        <dbReference type="HAMAP-Rule" id="MF_01202"/>
    </source>
</evidence>
<protein>
    <recommendedName>
        <fullName evidence="1">D-amino acid dehydrogenase</fullName>
        <ecNumber evidence="1">1.4.99.-</ecNumber>
    </recommendedName>
</protein>
<accession>A1V6K0</accession>